<proteinExistence type="inferred from homology"/>
<dbReference type="EMBL" id="CP000672">
    <property type="protein sequence ID" value="ABR00344.1"/>
    <property type="molecule type" value="Genomic_DNA"/>
</dbReference>
<dbReference type="SMR" id="A5UHT8"/>
<dbReference type="KEGG" id="hiq:CGSHiGG_07425"/>
<dbReference type="HOGENOM" id="CLU_158491_1_2_6"/>
<dbReference type="Proteomes" id="UP000001990">
    <property type="component" value="Chromosome"/>
</dbReference>
<dbReference type="GO" id="GO:0022625">
    <property type="term" value="C:cytosolic large ribosomal subunit"/>
    <property type="evidence" value="ECO:0007669"/>
    <property type="project" value="TreeGrafter"/>
</dbReference>
<dbReference type="GO" id="GO:0003735">
    <property type="term" value="F:structural constituent of ribosome"/>
    <property type="evidence" value="ECO:0007669"/>
    <property type="project" value="InterPro"/>
</dbReference>
<dbReference type="GO" id="GO:0006412">
    <property type="term" value="P:translation"/>
    <property type="evidence" value="ECO:0007669"/>
    <property type="project" value="UniProtKB-UniRule"/>
</dbReference>
<dbReference type="CDD" id="cd00427">
    <property type="entry name" value="Ribosomal_L29_HIP"/>
    <property type="match status" value="1"/>
</dbReference>
<dbReference type="FunFam" id="1.10.287.310:FF:000001">
    <property type="entry name" value="50S ribosomal protein L29"/>
    <property type="match status" value="1"/>
</dbReference>
<dbReference type="Gene3D" id="1.10.287.310">
    <property type="match status" value="1"/>
</dbReference>
<dbReference type="HAMAP" id="MF_00374">
    <property type="entry name" value="Ribosomal_uL29"/>
    <property type="match status" value="1"/>
</dbReference>
<dbReference type="InterPro" id="IPR050063">
    <property type="entry name" value="Ribosomal_protein_uL29"/>
</dbReference>
<dbReference type="InterPro" id="IPR001854">
    <property type="entry name" value="Ribosomal_uL29"/>
</dbReference>
<dbReference type="InterPro" id="IPR018254">
    <property type="entry name" value="Ribosomal_uL29_CS"/>
</dbReference>
<dbReference type="InterPro" id="IPR036049">
    <property type="entry name" value="Ribosomal_uL29_sf"/>
</dbReference>
<dbReference type="NCBIfam" id="TIGR00012">
    <property type="entry name" value="L29"/>
    <property type="match status" value="1"/>
</dbReference>
<dbReference type="PANTHER" id="PTHR10916">
    <property type="entry name" value="60S RIBOSOMAL PROTEIN L35/50S RIBOSOMAL PROTEIN L29"/>
    <property type="match status" value="1"/>
</dbReference>
<dbReference type="PANTHER" id="PTHR10916:SF0">
    <property type="entry name" value="LARGE RIBOSOMAL SUBUNIT PROTEIN UL29C"/>
    <property type="match status" value="1"/>
</dbReference>
<dbReference type="Pfam" id="PF00831">
    <property type="entry name" value="Ribosomal_L29"/>
    <property type="match status" value="1"/>
</dbReference>
<dbReference type="SUPFAM" id="SSF46561">
    <property type="entry name" value="Ribosomal protein L29 (L29p)"/>
    <property type="match status" value="1"/>
</dbReference>
<dbReference type="PROSITE" id="PS00579">
    <property type="entry name" value="RIBOSOMAL_L29"/>
    <property type="match status" value="1"/>
</dbReference>
<evidence type="ECO:0000255" key="1">
    <source>
        <dbReference type="HAMAP-Rule" id="MF_00374"/>
    </source>
</evidence>
<evidence type="ECO:0000305" key="2"/>
<feature type="chain" id="PRO_1000007493" description="Large ribosomal subunit protein uL29">
    <location>
        <begin position="1"/>
        <end position="63"/>
    </location>
</feature>
<sequence>MKAQDLRTKSVEELNAELVNLLGEQFKLRMQTATGQLQQTHQAKQVRRDIARVKTVLTEKAGE</sequence>
<comment type="similarity">
    <text evidence="1">Belongs to the universal ribosomal protein uL29 family.</text>
</comment>
<accession>A5UHT8</accession>
<reference key="1">
    <citation type="journal article" date="2007" name="Genome Biol.">
        <title>Characterization and modeling of the Haemophilus influenzae core and supragenomes based on the complete genomic sequences of Rd and 12 clinical nontypeable strains.</title>
        <authorList>
            <person name="Hogg J.S."/>
            <person name="Hu F.Z."/>
            <person name="Janto B."/>
            <person name="Boissy R."/>
            <person name="Hayes J."/>
            <person name="Keefe R."/>
            <person name="Post J.C."/>
            <person name="Ehrlich G.D."/>
        </authorList>
    </citation>
    <scope>NUCLEOTIDE SEQUENCE [LARGE SCALE GENOMIC DNA]</scope>
    <source>
        <strain>PittGG</strain>
    </source>
</reference>
<name>RL29_HAEIG</name>
<organism>
    <name type="scientific">Haemophilus influenzae (strain PittGG)</name>
    <dbReference type="NCBI Taxonomy" id="374931"/>
    <lineage>
        <taxon>Bacteria</taxon>
        <taxon>Pseudomonadati</taxon>
        <taxon>Pseudomonadota</taxon>
        <taxon>Gammaproteobacteria</taxon>
        <taxon>Pasteurellales</taxon>
        <taxon>Pasteurellaceae</taxon>
        <taxon>Haemophilus</taxon>
    </lineage>
</organism>
<protein>
    <recommendedName>
        <fullName evidence="1">Large ribosomal subunit protein uL29</fullName>
    </recommendedName>
    <alternativeName>
        <fullName evidence="2">50S ribosomal protein L29</fullName>
    </alternativeName>
</protein>
<keyword id="KW-0687">Ribonucleoprotein</keyword>
<keyword id="KW-0689">Ribosomal protein</keyword>
<gene>
    <name evidence="1" type="primary">rpmC</name>
    <name type="ordered locus">CGSHiGG_07425</name>
</gene>